<organism>
    <name type="scientific">Legionella pneumophila subsp. pneumophila (strain Philadelphia 1 / ATCC 33152 / DSM 7513)</name>
    <dbReference type="NCBI Taxonomy" id="272624"/>
    <lineage>
        <taxon>Bacteria</taxon>
        <taxon>Pseudomonadati</taxon>
        <taxon>Pseudomonadota</taxon>
        <taxon>Gammaproteobacteria</taxon>
        <taxon>Legionellales</taxon>
        <taxon>Legionellaceae</taxon>
        <taxon>Legionella</taxon>
    </lineage>
</organism>
<gene>
    <name evidence="1" type="primary">uppS</name>
    <name type="ordered locus">lpg0503</name>
</gene>
<accession>Q5ZY69</accession>
<protein>
    <recommendedName>
        <fullName evidence="1">Ditrans,polycis-undecaprenyl-diphosphate synthase ((2E,6E)-farnesyl-diphosphate specific)</fullName>
        <ecNumber evidence="1">2.5.1.31</ecNumber>
    </recommendedName>
    <alternativeName>
        <fullName evidence="1">Ditrans,polycis-undecaprenylcistransferase</fullName>
    </alternativeName>
    <alternativeName>
        <fullName evidence="1">Undecaprenyl diphosphate synthase</fullName>
        <shortName evidence="1">UDS</shortName>
    </alternativeName>
    <alternativeName>
        <fullName evidence="1">Undecaprenyl pyrophosphate synthase</fullName>
        <shortName evidence="1">UPP synthase</shortName>
    </alternativeName>
</protein>
<comment type="function">
    <text evidence="1">Catalyzes the sequential condensation of isopentenyl diphosphate (IPP) with (2E,6E)-farnesyl diphosphate (E,E-FPP) to yield (2Z,6Z,10Z,14Z,18Z,22Z,26Z,30Z,34E,38E)-undecaprenyl diphosphate (di-trans,octa-cis-UPP). UPP is the precursor of glycosyl carrier lipid in the biosynthesis of bacterial cell wall polysaccharide components such as peptidoglycan and lipopolysaccharide.</text>
</comment>
<comment type="catalytic activity">
    <reaction evidence="1">
        <text>8 isopentenyl diphosphate + (2E,6E)-farnesyl diphosphate = di-trans,octa-cis-undecaprenyl diphosphate + 8 diphosphate</text>
        <dbReference type="Rhea" id="RHEA:27551"/>
        <dbReference type="ChEBI" id="CHEBI:33019"/>
        <dbReference type="ChEBI" id="CHEBI:58405"/>
        <dbReference type="ChEBI" id="CHEBI:128769"/>
        <dbReference type="ChEBI" id="CHEBI:175763"/>
        <dbReference type="EC" id="2.5.1.31"/>
    </reaction>
</comment>
<comment type="cofactor">
    <cofactor evidence="1">
        <name>Mg(2+)</name>
        <dbReference type="ChEBI" id="CHEBI:18420"/>
    </cofactor>
    <text evidence="1">Binds 2 magnesium ions per subunit.</text>
</comment>
<comment type="subunit">
    <text evidence="1">Homodimer.</text>
</comment>
<comment type="similarity">
    <text evidence="1">Belongs to the UPP synthase family.</text>
</comment>
<feature type="chain" id="PRO_0000123630" description="Ditrans,polycis-undecaprenyl-diphosphate synthase ((2E,6E)-farnesyl-diphosphate specific)">
    <location>
        <begin position="1"/>
        <end position="238"/>
    </location>
</feature>
<feature type="active site" evidence="1">
    <location>
        <position position="14"/>
    </location>
</feature>
<feature type="active site" description="Proton acceptor" evidence="1">
    <location>
        <position position="62"/>
    </location>
</feature>
<feature type="binding site" evidence="1">
    <location>
        <position position="14"/>
    </location>
    <ligand>
        <name>Mg(2+)</name>
        <dbReference type="ChEBI" id="CHEBI:18420"/>
    </ligand>
</feature>
<feature type="binding site" evidence="1">
    <location>
        <begin position="15"/>
        <end position="18"/>
    </location>
    <ligand>
        <name>substrate</name>
    </ligand>
</feature>
<feature type="binding site" evidence="1">
    <location>
        <position position="19"/>
    </location>
    <ligand>
        <name>substrate</name>
    </ligand>
</feature>
<feature type="binding site" evidence="1">
    <location>
        <position position="27"/>
    </location>
    <ligand>
        <name>substrate</name>
    </ligand>
</feature>
<feature type="binding site" evidence="1">
    <location>
        <position position="31"/>
    </location>
    <ligand>
        <name>substrate</name>
    </ligand>
</feature>
<feature type="binding site" evidence="1">
    <location>
        <begin position="59"/>
        <end position="61"/>
    </location>
    <ligand>
        <name>substrate</name>
    </ligand>
</feature>
<feature type="binding site" evidence="1">
    <location>
        <position position="63"/>
    </location>
    <ligand>
        <name>substrate</name>
    </ligand>
</feature>
<feature type="binding site" evidence="1">
    <location>
        <position position="65"/>
    </location>
    <ligand>
        <name>substrate</name>
    </ligand>
</feature>
<feature type="binding site" evidence="1">
    <location>
        <position position="182"/>
    </location>
    <ligand>
        <name>substrate</name>
    </ligand>
</feature>
<feature type="binding site" evidence="1">
    <location>
        <begin position="188"/>
        <end position="190"/>
    </location>
    <ligand>
        <name>substrate</name>
    </ligand>
</feature>
<feature type="binding site" evidence="1">
    <location>
        <position position="201"/>
    </location>
    <ligand>
        <name>Mg(2+)</name>
        <dbReference type="ChEBI" id="CHEBI:18420"/>
    </ligand>
</feature>
<keyword id="KW-0133">Cell shape</keyword>
<keyword id="KW-0961">Cell wall biogenesis/degradation</keyword>
<keyword id="KW-0460">Magnesium</keyword>
<keyword id="KW-0479">Metal-binding</keyword>
<keyword id="KW-0573">Peptidoglycan synthesis</keyword>
<keyword id="KW-1185">Reference proteome</keyword>
<keyword id="KW-0808">Transferase</keyword>
<evidence type="ECO:0000255" key="1">
    <source>
        <dbReference type="HAMAP-Rule" id="MF_01139"/>
    </source>
</evidence>
<sequence length="238" mass="27393">MNHKLPQHIAVVMDGNGRWAESRGLPRVEGHKAGLDSVKKIINCCLEKKISCLSLFAFSSENWSRPVTEVNFLMELFLEALRKEIDDLNQHGIRLKFTGDREPLSQILQKQMCDAEALTKNNQQLILNVVVNYGGKWDIVTAARKLIRTVLDGKLAYDEINEAVFAQFLDTNGMPEPDLFIRTSGELRISNFFLWQLAYTELYFTDVHWPDFNEHEFELALISFAKRARRFGQISQSE</sequence>
<proteinExistence type="inferred from homology"/>
<name>UPPS_LEGPH</name>
<reference key="1">
    <citation type="journal article" date="2004" name="Science">
        <title>The genomic sequence of the accidental pathogen Legionella pneumophila.</title>
        <authorList>
            <person name="Chien M."/>
            <person name="Morozova I."/>
            <person name="Shi S."/>
            <person name="Sheng H."/>
            <person name="Chen J."/>
            <person name="Gomez S.M."/>
            <person name="Asamani G."/>
            <person name="Hill K."/>
            <person name="Nuara J."/>
            <person name="Feder M."/>
            <person name="Rineer J."/>
            <person name="Greenberg J.J."/>
            <person name="Steshenko V."/>
            <person name="Park S.H."/>
            <person name="Zhao B."/>
            <person name="Teplitskaya E."/>
            <person name="Edwards J.R."/>
            <person name="Pampou S."/>
            <person name="Georghiou A."/>
            <person name="Chou I.-C."/>
            <person name="Iannuccilli W."/>
            <person name="Ulz M.E."/>
            <person name="Kim D.H."/>
            <person name="Geringer-Sameth A."/>
            <person name="Goldsberry C."/>
            <person name="Morozov P."/>
            <person name="Fischer S.G."/>
            <person name="Segal G."/>
            <person name="Qu X."/>
            <person name="Rzhetsky A."/>
            <person name="Zhang P."/>
            <person name="Cayanis E."/>
            <person name="De Jong P.J."/>
            <person name="Ju J."/>
            <person name="Kalachikov S."/>
            <person name="Shuman H.A."/>
            <person name="Russo J.J."/>
        </authorList>
    </citation>
    <scope>NUCLEOTIDE SEQUENCE [LARGE SCALE GENOMIC DNA]</scope>
    <source>
        <strain>Philadelphia 1 / ATCC 33152 / DSM 7513</strain>
    </source>
</reference>
<dbReference type="EC" id="2.5.1.31" evidence="1"/>
<dbReference type="EMBL" id="AE017354">
    <property type="protein sequence ID" value="AAU26600.1"/>
    <property type="molecule type" value="Genomic_DNA"/>
</dbReference>
<dbReference type="RefSeq" id="WP_010946251.1">
    <property type="nucleotide sequence ID" value="NC_002942.5"/>
</dbReference>
<dbReference type="RefSeq" id="YP_094547.1">
    <property type="nucleotide sequence ID" value="NC_002942.5"/>
</dbReference>
<dbReference type="SMR" id="Q5ZY69"/>
<dbReference type="STRING" id="272624.lpg0503"/>
<dbReference type="PaxDb" id="272624-lpg0503"/>
<dbReference type="GeneID" id="57034504"/>
<dbReference type="KEGG" id="lpn:lpg0503"/>
<dbReference type="PATRIC" id="fig|272624.6.peg.525"/>
<dbReference type="eggNOG" id="COG0020">
    <property type="taxonomic scope" value="Bacteria"/>
</dbReference>
<dbReference type="HOGENOM" id="CLU_038505_1_1_6"/>
<dbReference type="OrthoDB" id="4191603at2"/>
<dbReference type="Proteomes" id="UP000000609">
    <property type="component" value="Chromosome"/>
</dbReference>
<dbReference type="GO" id="GO:0005829">
    <property type="term" value="C:cytosol"/>
    <property type="evidence" value="ECO:0007669"/>
    <property type="project" value="TreeGrafter"/>
</dbReference>
<dbReference type="GO" id="GO:0008834">
    <property type="term" value="F:ditrans,polycis-undecaprenyl-diphosphate synthase [(2E,6E)-farnesyl-diphosphate specific] activity"/>
    <property type="evidence" value="ECO:0007669"/>
    <property type="project" value="UniProtKB-UniRule"/>
</dbReference>
<dbReference type="GO" id="GO:0000287">
    <property type="term" value="F:magnesium ion binding"/>
    <property type="evidence" value="ECO:0007669"/>
    <property type="project" value="UniProtKB-UniRule"/>
</dbReference>
<dbReference type="GO" id="GO:0071555">
    <property type="term" value="P:cell wall organization"/>
    <property type="evidence" value="ECO:0007669"/>
    <property type="project" value="UniProtKB-KW"/>
</dbReference>
<dbReference type="GO" id="GO:0009252">
    <property type="term" value="P:peptidoglycan biosynthetic process"/>
    <property type="evidence" value="ECO:0007669"/>
    <property type="project" value="UniProtKB-UniRule"/>
</dbReference>
<dbReference type="GO" id="GO:0016094">
    <property type="term" value="P:polyprenol biosynthetic process"/>
    <property type="evidence" value="ECO:0007669"/>
    <property type="project" value="TreeGrafter"/>
</dbReference>
<dbReference type="GO" id="GO:0008360">
    <property type="term" value="P:regulation of cell shape"/>
    <property type="evidence" value="ECO:0007669"/>
    <property type="project" value="UniProtKB-KW"/>
</dbReference>
<dbReference type="CDD" id="cd00475">
    <property type="entry name" value="Cis_IPPS"/>
    <property type="match status" value="1"/>
</dbReference>
<dbReference type="FunFam" id="3.40.1180.10:FF:000001">
    <property type="entry name" value="(2E,6E)-farnesyl-diphosphate-specific ditrans,polycis-undecaprenyl-diphosphate synthase"/>
    <property type="match status" value="1"/>
</dbReference>
<dbReference type="Gene3D" id="3.40.1180.10">
    <property type="entry name" value="Decaprenyl diphosphate synthase-like"/>
    <property type="match status" value="1"/>
</dbReference>
<dbReference type="HAMAP" id="MF_01139">
    <property type="entry name" value="ISPT"/>
    <property type="match status" value="1"/>
</dbReference>
<dbReference type="InterPro" id="IPR001441">
    <property type="entry name" value="UPP_synth-like"/>
</dbReference>
<dbReference type="InterPro" id="IPR018520">
    <property type="entry name" value="UPP_synth-like_CS"/>
</dbReference>
<dbReference type="InterPro" id="IPR036424">
    <property type="entry name" value="UPP_synth-like_sf"/>
</dbReference>
<dbReference type="NCBIfam" id="TIGR00055">
    <property type="entry name" value="uppS"/>
    <property type="match status" value="1"/>
</dbReference>
<dbReference type="PANTHER" id="PTHR10291:SF0">
    <property type="entry name" value="DEHYDRODOLICHYL DIPHOSPHATE SYNTHASE 2"/>
    <property type="match status" value="1"/>
</dbReference>
<dbReference type="PANTHER" id="PTHR10291">
    <property type="entry name" value="DEHYDRODOLICHYL DIPHOSPHATE SYNTHASE FAMILY MEMBER"/>
    <property type="match status" value="1"/>
</dbReference>
<dbReference type="Pfam" id="PF01255">
    <property type="entry name" value="Prenyltransf"/>
    <property type="match status" value="1"/>
</dbReference>
<dbReference type="SUPFAM" id="SSF64005">
    <property type="entry name" value="Undecaprenyl diphosphate synthase"/>
    <property type="match status" value="1"/>
</dbReference>
<dbReference type="PROSITE" id="PS01066">
    <property type="entry name" value="UPP_SYNTHASE"/>
    <property type="match status" value="1"/>
</dbReference>